<dbReference type="EC" id="3.1.26.4" evidence="1"/>
<dbReference type="EMBL" id="CR378672">
    <property type="protein sequence ID" value="CAG21288.1"/>
    <property type="molecule type" value="Genomic_DNA"/>
</dbReference>
<dbReference type="RefSeq" id="WP_011219555.1">
    <property type="nucleotide sequence ID" value="NC_006370.1"/>
</dbReference>
<dbReference type="SMR" id="Q6LN38"/>
<dbReference type="STRING" id="298386.PBPRA2954"/>
<dbReference type="KEGG" id="ppr:PBPRA2954"/>
<dbReference type="eggNOG" id="COG0164">
    <property type="taxonomic scope" value="Bacteria"/>
</dbReference>
<dbReference type="HOGENOM" id="CLU_036532_3_2_6"/>
<dbReference type="Proteomes" id="UP000000593">
    <property type="component" value="Chromosome 1"/>
</dbReference>
<dbReference type="GO" id="GO:0005737">
    <property type="term" value="C:cytoplasm"/>
    <property type="evidence" value="ECO:0007669"/>
    <property type="project" value="UniProtKB-SubCell"/>
</dbReference>
<dbReference type="GO" id="GO:0032299">
    <property type="term" value="C:ribonuclease H2 complex"/>
    <property type="evidence" value="ECO:0007669"/>
    <property type="project" value="TreeGrafter"/>
</dbReference>
<dbReference type="GO" id="GO:0030145">
    <property type="term" value="F:manganese ion binding"/>
    <property type="evidence" value="ECO:0007669"/>
    <property type="project" value="UniProtKB-UniRule"/>
</dbReference>
<dbReference type="GO" id="GO:0003723">
    <property type="term" value="F:RNA binding"/>
    <property type="evidence" value="ECO:0007669"/>
    <property type="project" value="InterPro"/>
</dbReference>
<dbReference type="GO" id="GO:0004523">
    <property type="term" value="F:RNA-DNA hybrid ribonuclease activity"/>
    <property type="evidence" value="ECO:0007669"/>
    <property type="project" value="UniProtKB-UniRule"/>
</dbReference>
<dbReference type="GO" id="GO:0043137">
    <property type="term" value="P:DNA replication, removal of RNA primer"/>
    <property type="evidence" value="ECO:0007669"/>
    <property type="project" value="TreeGrafter"/>
</dbReference>
<dbReference type="GO" id="GO:0006298">
    <property type="term" value="P:mismatch repair"/>
    <property type="evidence" value="ECO:0007669"/>
    <property type="project" value="TreeGrafter"/>
</dbReference>
<dbReference type="CDD" id="cd07182">
    <property type="entry name" value="RNase_HII_bacteria_HII_like"/>
    <property type="match status" value="1"/>
</dbReference>
<dbReference type="FunFam" id="3.30.420.10:FF:000006">
    <property type="entry name" value="Ribonuclease HII"/>
    <property type="match status" value="1"/>
</dbReference>
<dbReference type="Gene3D" id="3.30.420.10">
    <property type="entry name" value="Ribonuclease H-like superfamily/Ribonuclease H"/>
    <property type="match status" value="1"/>
</dbReference>
<dbReference type="HAMAP" id="MF_00052_B">
    <property type="entry name" value="RNase_HII_B"/>
    <property type="match status" value="1"/>
</dbReference>
<dbReference type="InterPro" id="IPR022898">
    <property type="entry name" value="RNase_HII"/>
</dbReference>
<dbReference type="InterPro" id="IPR001352">
    <property type="entry name" value="RNase_HII/HIII"/>
</dbReference>
<dbReference type="InterPro" id="IPR024567">
    <property type="entry name" value="RNase_HII/HIII_dom"/>
</dbReference>
<dbReference type="InterPro" id="IPR012337">
    <property type="entry name" value="RNaseH-like_sf"/>
</dbReference>
<dbReference type="InterPro" id="IPR036397">
    <property type="entry name" value="RNaseH_sf"/>
</dbReference>
<dbReference type="NCBIfam" id="NF000594">
    <property type="entry name" value="PRK00015.1-1"/>
    <property type="match status" value="1"/>
</dbReference>
<dbReference type="NCBIfam" id="NF000595">
    <property type="entry name" value="PRK00015.1-3"/>
    <property type="match status" value="1"/>
</dbReference>
<dbReference type="NCBIfam" id="NF000596">
    <property type="entry name" value="PRK00015.1-4"/>
    <property type="match status" value="1"/>
</dbReference>
<dbReference type="PANTHER" id="PTHR10954">
    <property type="entry name" value="RIBONUCLEASE H2 SUBUNIT A"/>
    <property type="match status" value="1"/>
</dbReference>
<dbReference type="PANTHER" id="PTHR10954:SF18">
    <property type="entry name" value="RIBONUCLEASE HII"/>
    <property type="match status" value="1"/>
</dbReference>
<dbReference type="Pfam" id="PF01351">
    <property type="entry name" value="RNase_HII"/>
    <property type="match status" value="1"/>
</dbReference>
<dbReference type="SUPFAM" id="SSF53098">
    <property type="entry name" value="Ribonuclease H-like"/>
    <property type="match status" value="1"/>
</dbReference>
<dbReference type="PROSITE" id="PS51975">
    <property type="entry name" value="RNASE_H_2"/>
    <property type="match status" value="1"/>
</dbReference>
<comment type="function">
    <text evidence="1">Endonuclease that specifically degrades the RNA of RNA-DNA hybrids.</text>
</comment>
<comment type="catalytic activity">
    <reaction evidence="1">
        <text>Endonucleolytic cleavage to 5'-phosphomonoester.</text>
        <dbReference type="EC" id="3.1.26.4"/>
    </reaction>
</comment>
<comment type="cofactor">
    <cofactor evidence="1">
        <name>Mn(2+)</name>
        <dbReference type="ChEBI" id="CHEBI:29035"/>
    </cofactor>
    <cofactor evidence="1">
        <name>Mg(2+)</name>
        <dbReference type="ChEBI" id="CHEBI:18420"/>
    </cofactor>
    <text evidence="1">Manganese or magnesium. Binds 1 divalent metal ion per monomer in the absence of substrate. May bind a second metal ion after substrate binding.</text>
</comment>
<comment type="subcellular location">
    <subcellularLocation>
        <location evidence="1">Cytoplasm</location>
    </subcellularLocation>
</comment>
<comment type="similarity">
    <text evidence="1">Belongs to the RNase HII family.</text>
</comment>
<name>RNH2_PHOPR</name>
<feature type="chain" id="PRO_0000111600" description="Ribonuclease HII">
    <location>
        <begin position="1"/>
        <end position="201"/>
    </location>
</feature>
<feature type="domain" description="RNase H type-2" evidence="2">
    <location>
        <begin position="14"/>
        <end position="201"/>
    </location>
</feature>
<feature type="binding site" evidence="1">
    <location>
        <position position="20"/>
    </location>
    <ligand>
        <name>a divalent metal cation</name>
        <dbReference type="ChEBI" id="CHEBI:60240"/>
    </ligand>
</feature>
<feature type="binding site" evidence="1">
    <location>
        <position position="21"/>
    </location>
    <ligand>
        <name>a divalent metal cation</name>
        <dbReference type="ChEBI" id="CHEBI:60240"/>
    </ligand>
</feature>
<feature type="binding site" evidence="1">
    <location>
        <position position="112"/>
    </location>
    <ligand>
        <name>a divalent metal cation</name>
        <dbReference type="ChEBI" id="CHEBI:60240"/>
    </ligand>
</feature>
<proteinExistence type="inferred from homology"/>
<accession>Q6LN38</accession>
<gene>
    <name evidence="1" type="primary">rnhB</name>
    <name type="ordered locus">PBPRA2954</name>
</gene>
<reference key="1">
    <citation type="journal article" date="2005" name="Science">
        <title>Life at depth: Photobacterium profundum genome sequence and expression analysis.</title>
        <authorList>
            <person name="Vezzi A."/>
            <person name="Campanaro S."/>
            <person name="D'Angelo M."/>
            <person name="Simonato F."/>
            <person name="Vitulo N."/>
            <person name="Lauro F.M."/>
            <person name="Cestaro A."/>
            <person name="Malacrida G."/>
            <person name="Simionati B."/>
            <person name="Cannata N."/>
            <person name="Romualdi C."/>
            <person name="Bartlett D.H."/>
            <person name="Valle G."/>
        </authorList>
    </citation>
    <scope>NUCLEOTIDE SEQUENCE [LARGE SCALE GENOMIC DNA]</scope>
    <source>
        <strain>ATCC BAA-1253 / SS9</strain>
    </source>
</reference>
<keyword id="KW-0963">Cytoplasm</keyword>
<keyword id="KW-0255">Endonuclease</keyword>
<keyword id="KW-0378">Hydrolase</keyword>
<keyword id="KW-0464">Manganese</keyword>
<keyword id="KW-0479">Metal-binding</keyword>
<keyword id="KW-0540">Nuclease</keyword>
<keyword id="KW-1185">Reference proteome</keyword>
<evidence type="ECO:0000255" key="1">
    <source>
        <dbReference type="HAMAP-Rule" id="MF_00052"/>
    </source>
</evidence>
<evidence type="ECO:0000255" key="2">
    <source>
        <dbReference type="PROSITE-ProRule" id="PRU01319"/>
    </source>
</evidence>
<protein>
    <recommendedName>
        <fullName evidence="1">Ribonuclease HII</fullName>
        <shortName evidence="1">RNase HII</shortName>
        <ecNumber evidence="1">3.1.26.4</ecNumber>
    </recommendedName>
</protein>
<organism>
    <name type="scientific">Photobacterium profundum (strain SS9)</name>
    <dbReference type="NCBI Taxonomy" id="298386"/>
    <lineage>
        <taxon>Bacteria</taxon>
        <taxon>Pseudomonadati</taxon>
        <taxon>Pseudomonadota</taxon>
        <taxon>Gammaproteobacteria</taxon>
        <taxon>Vibrionales</taxon>
        <taxon>Vibrionaceae</taxon>
        <taxon>Photobacterium</taxon>
    </lineage>
</organism>
<sequence>MTKDFEPFVYPPANLIAGVDEVGRGPLVGAVVTAAVILDPNNPIVGLTDSKKLSEKKRNVLFDEIKEKAVAWSLGRCEPEEIDELNILQATMVAMQRAVADLSVQPDFVLIDGNKIPQLPMAAQAVVKGDLRVAEISAASIIAKVTRDREMEVLDAQFPQYGFAKHKGYPTKVHVEALELHGAIEQHRKSFKPVKRILGIE</sequence>